<dbReference type="EMBL" id="Z48755">
    <property type="protein sequence ID" value="CAA88648.1"/>
    <property type="molecule type" value="Genomic_DNA"/>
</dbReference>
<dbReference type="EMBL" id="BK006946">
    <property type="protein sequence ID" value="DAA10105.1"/>
    <property type="molecule type" value="Genomic_DNA"/>
</dbReference>
<dbReference type="PIR" id="S59448">
    <property type="entry name" value="S59448"/>
</dbReference>
<dbReference type="RefSeq" id="NP_013933.1">
    <property type="nucleotide sequence ID" value="NM_001182713.1"/>
</dbReference>
<dbReference type="BioGRID" id="35384">
    <property type="interactions" value="74"/>
</dbReference>
<dbReference type="DIP" id="DIP-4414N"/>
<dbReference type="FunCoup" id="Q03695">
    <property type="interactions" value="46"/>
</dbReference>
<dbReference type="IntAct" id="Q03695">
    <property type="interactions" value="5"/>
</dbReference>
<dbReference type="STRING" id="4932.YMR206W"/>
<dbReference type="iPTMnet" id="Q03695"/>
<dbReference type="PaxDb" id="4932-YMR206W"/>
<dbReference type="PeptideAtlas" id="Q03695"/>
<dbReference type="EnsemblFungi" id="YMR206W_mRNA">
    <property type="protein sequence ID" value="YMR206W"/>
    <property type="gene ID" value="YMR206W"/>
</dbReference>
<dbReference type="GeneID" id="855246"/>
<dbReference type="KEGG" id="sce:YMR206W"/>
<dbReference type="AGR" id="SGD:S000004819"/>
<dbReference type="SGD" id="S000004819">
    <property type="gene designation" value="YMR206W"/>
</dbReference>
<dbReference type="VEuPathDB" id="FungiDB:YMR206W"/>
<dbReference type="eggNOG" id="ENOG502S7HD">
    <property type="taxonomic scope" value="Eukaryota"/>
</dbReference>
<dbReference type="HOGENOM" id="CLU_077200_0_0_1"/>
<dbReference type="InParanoid" id="Q03695"/>
<dbReference type="OMA" id="CHINHST"/>
<dbReference type="OrthoDB" id="4070131at2759"/>
<dbReference type="BioCyc" id="YEAST:G3O-32891-MONOMER"/>
<dbReference type="BioGRID-ORCS" id="855246">
    <property type="hits" value="2 hits in 10 CRISPR screens"/>
</dbReference>
<dbReference type="PRO" id="PR:Q03695"/>
<dbReference type="Proteomes" id="UP000002311">
    <property type="component" value="Chromosome XIII"/>
</dbReference>
<dbReference type="RNAct" id="Q03695">
    <property type="molecule type" value="protein"/>
</dbReference>
<dbReference type="InterPro" id="IPR031426">
    <property type="entry name" value="DUF4667"/>
</dbReference>
<dbReference type="Pfam" id="PF15700">
    <property type="entry name" value="DUF4667"/>
    <property type="match status" value="1"/>
</dbReference>
<accession>Q03695</accession>
<accession>D6W031</accession>
<keyword id="KW-1185">Reference proteome</keyword>
<organism>
    <name type="scientific">Saccharomyces cerevisiae (strain ATCC 204508 / S288c)</name>
    <name type="common">Baker's yeast</name>
    <dbReference type="NCBI Taxonomy" id="559292"/>
    <lineage>
        <taxon>Eukaryota</taxon>
        <taxon>Fungi</taxon>
        <taxon>Dikarya</taxon>
        <taxon>Ascomycota</taxon>
        <taxon>Saccharomycotina</taxon>
        <taxon>Saccharomycetes</taxon>
        <taxon>Saccharomycetales</taxon>
        <taxon>Saccharomycetaceae</taxon>
        <taxon>Saccharomyces</taxon>
    </lineage>
</organism>
<reference key="1">
    <citation type="journal article" date="1997" name="Nature">
        <title>The nucleotide sequence of Saccharomyces cerevisiae chromosome XIII.</title>
        <authorList>
            <person name="Bowman S."/>
            <person name="Churcher C.M."/>
            <person name="Badcock K."/>
            <person name="Brown D."/>
            <person name="Chillingworth T."/>
            <person name="Connor R."/>
            <person name="Dedman K."/>
            <person name="Devlin K."/>
            <person name="Gentles S."/>
            <person name="Hamlin N."/>
            <person name="Hunt S."/>
            <person name="Jagels K."/>
            <person name="Lye G."/>
            <person name="Moule S."/>
            <person name="Odell C."/>
            <person name="Pearson D."/>
            <person name="Rajandream M.A."/>
            <person name="Rice P."/>
            <person name="Skelton J."/>
            <person name="Walsh S.V."/>
            <person name="Whitehead S."/>
            <person name="Barrell B.G."/>
        </authorList>
    </citation>
    <scope>NUCLEOTIDE SEQUENCE [LARGE SCALE GENOMIC DNA]</scope>
    <source>
        <strain>ATCC 204508 / S288c</strain>
    </source>
</reference>
<reference key="2">
    <citation type="journal article" date="2014" name="G3 (Bethesda)">
        <title>The reference genome sequence of Saccharomyces cerevisiae: Then and now.</title>
        <authorList>
            <person name="Engel S.R."/>
            <person name="Dietrich F.S."/>
            <person name="Fisk D.G."/>
            <person name="Binkley G."/>
            <person name="Balakrishnan R."/>
            <person name="Costanzo M.C."/>
            <person name="Dwight S.S."/>
            <person name="Hitz B.C."/>
            <person name="Karra K."/>
            <person name="Nash R.S."/>
            <person name="Weng S."/>
            <person name="Wong E.D."/>
            <person name="Lloyd P."/>
            <person name="Skrzypek M.S."/>
            <person name="Miyasato S.R."/>
            <person name="Simison M."/>
            <person name="Cherry J.M."/>
        </authorList>
    </citation>
    <scope>GENOME REANNOTATION</scope>
    <source>
        <strain>ATCC 204508 / S288c</strain>
    </source>
</reference>
<sequence length="313" mass="35018">MLSSSSNRPISAHLTIHYKAIQEEEGEDMRSGAGSGGHHDDYFLESNRSPTPNKKHEFIKTVLNINDNDSEFSESCSPREKLHNEGACNTDLFGDFMSKRQQRLSNSMNIYDLYQCVHNLSPSNNNHQFIARRFSDSHIPSLHHRQQQQKVTTKNFVQPTKDIQRIASYAADSDQRVKYLPNYHQSAPSTALSAAESKAAVPRKLPDRDSTQNYVLKLQLSSPNSQPMSPRTRPGYRPSCSSSNCSSSSSSSACSSVSISDPNNITAYETNNVNPQFPSNQPLDISSPCARHHHRRNSIAVKFDKALYKKTTG</sequence>
<name>YM58_YEAST</name>
<gene>
    <name type="ordered locus">YMR206W</name>
    <name type="ORF">YM8325.07</name>
</gene>
<protein>
    <recommendedName>
        <fullName>Uncharacterized protein YMR206W</fullName>
    </recommendedName>
</protein>
<feature type="chain" id="PRO_0000203329" description="Uncharacterized protein YMR206W">
    <location>
        <begin position="1"/>
        <end position="313"/>
    </location>
</feature>
<feature type="region of interest" description="Disordered" evidence="1">
    <location>
        <begin position="24"/>
        <end position="53"/>
    </location>
</feature>
<feature type="region of interest" description="Disordered" evidence="1">
    <location>
        <begin position="190"/>
        <end position="291"/>
    </location>
</feature>
<feature type="compositionally biased region" description="Polar residues" evidence="1">
    <location>
        <begin position="211"/>
        <end position="229"/>
    </location>
</feature>
<feature type="compositionally biased region" description="Low complexity" evidence="1">
    <location>
        <begin position="239"/>
        <end position="260"/>
    </location>
</feature>
<feature type="compositionally biased region" description="Polar residues" evidence="1">
    <location>
        <begin position="261"/>
        <end position="284"/>
    </location>
</feature>
<evidence type="ECO:0000256" key="1">
    <source>
        <dbReference type="SAM" id="MobiDB-lite"/>
    </source>
</evidence>
<proteinExistence type="predicted"/>